<keyword id="KW-0028">Amino-acid biosynthesis</keyword>
<keyword id="KW-0067">ATP-binding</keyword>
<keyword id="KW-0963">Cytoplasm</keyword>
<keyword id="KW-0328">Glycosyltransferase</keyword>
<keyword id="KW-0368">Histidine biosynthesis</keyword>
<keyword id="KW-0547">Nucleotide-binding</keyword>
<keyword id="KW-1185">Reference proteome</keyword>
<keyword id="KW-0808">Transferase</keyword>
<dbReference type="EC" id="2.4.2.17" evidence="1"/>
<dbReference type="EMBL" id="AP006840">
    <property type="protein sequence ID" value="BAD41823.1"/>
    <property type="molecule type" value="Genomic_DNA"/>
</dbReference>
<dbReference type="RefSeq" id="WP_011196957.1">
    <property type="nucleotide sequence ID" value="NC_006177.1"/>
</dbReference>
<dbReference type="SMR" id="Q67KH5"/>
<dbReference type="STRING" id="292459.STH2838"/>
<dbReference type="KEGG" id="sth:STH2838"/>
<dbReference type="eggNOG" id="COG0040">
    <property type="taxonomic scope" value="Bacteria"/>
</dbReference>
<dbReference type="HOGENOM" id="CLU_038115_2_0_9"/>
<dbReference type="OrthoDB" id="9801867at2"/>
<dbReference type="UniPathway" id="UPA00031">
    <property type="reaction ID" value="UER00006"/>
</dbReference>
<dbReference type="Proteomes" id="UP000000417">
    <property type="component" value="Chromosome"/>
</dbReference>
<dbReference type="GO" id="GO:0005737">
    <property type="term" value="C:cytoplasm"/>
    <property type="evidence" value="ECO:0007669"/>
    <property type="project" value="UniProtKB-SubCell"/>
</dbReference>
<dbReference type="GO" id="GO:0005524">
    <property type="term" value="F:ATP binding"/>
    <property type="evidence" value="ECO:0007669"/>
    <property type="project" value="UniProtKB-KW"/>
</dbReference>
<dbReference type="GO" id="GO:0003879">
    <property type="term" value="F:ATP phosphoribosyltransferase activity"/>
    <property type="evidence" value="ECO:0007669"/>
    <property type="project" value="UniProtKB-UniRule"/>
</dbReference>
<dbReference type="GO" id="GO:0000105">
    <property type="term" value="P:L-histidine biosynthetic process"/>
    <property type="evidence" value="ECO:0007669"/>
    <property type="project" value="UniProtKB-UniRule"/>
</dbReference>
<dbReference type="CDD" id="cd13595">
    <property type="entry name" value="PBP2_HisGs"/>
    <property type="match status" value="1"/>
</dbReference>
<dbReference type="FunFam" id="3.40.190.10:FF:000008">
    <property type="entry name" value="ATP phosphoribosyltransferase"/>
    <property type="match status" value="1"/>
</dbReference>
<dbReference type="Gene3D" id="3.40.190.10">
    <property type="entry name" value="Periplasmic binding protein-like II"/>
    <property type="match status" value="2"/>
</dbReference>
<dbReference type="HAMAP" id="MF_01018">
    <property type="entry name" value="HisG_Short"/>
    <property type="match status" value="1"/>
</dbReference>
<dbReference type="InterPro" id="IPR013820">
    <property type="entry name" value="ATP_PRibTrfase_cat"/>
</dbReference>
<dbReference type="InterPro" id="IPR018198">
    <property type="entry name" value="ATP_PRibTrfase_CS"/>
</dbReference>
<dbReference type="InterPro" id="IPR001348">
    <property type="entry name" value="ATP_PRibTrfase_HisG"/>
</dbReference>
<dbReference type="InterPro" id="IPR024893">
    <property type="entry name" value="ATP_PRibTrfase_HisG_short"/>
</dbReference>
<dbReference type="NCBIfam" id="TIGR00070">
    <property type="entry name" value="hisG"/>
    <property type="match status" value="1"/>
</dbReference>
<dbReference type="PANTHER" id="PTHR21403:SF8">
    <property type="entry name" value="ATP PHOSPHORIBOSYLTRANSFERASE"/>
    <property type="match status" value="1"/>
</dbReference>
<dbReference type="PANTHER" id="PTHR21403">
    <property type="entry name" value="ATP PHOSPHORIBOSYLTRANSFERASE ATP-PRTASE"/>
    <property type="match status" value="1"/>
</dbReference>
<dbReference type="Pfam" id="PF01634">
    <property type="entry name" value="HisG"/>
    <property type="match status" value="1"/>
</dbReference>
<dbReference type="SUPFAM" id="SSF53850">
    <property type="entry name" value="Periplasmic binding protein-like II"/>
    <property type="match status" value="1"/>
</dbReference>
<dbReference type="PROSITE" id="PS01316">
    <property type="entry name" value="ATP_P_PHORIBOSYLTR"/>
    <property type="match status" value="1"/>
</dbReference>
<accession>Q67KH5</accession>
<name>HIS1_SYMTH</name>
<comment type="function">
    <text evidence="1">Catalyzes the condensation of ATP and 5-phosphoribose 1-diphosphate to form N'-(5'-phosphoribosyl)-ATP (PR-ATP). Has a crucial role in the pathway because the rate of histidine biosynthesis seems to be controlled primarily by regulation of HisG enzymatic activity.</text>
</comment>
<comment type="catalytic activity">
    <reaction evidence="1">
        <text>1-(5-phospho-beta-D-ribosyl)-ATP + diphosphate = 5-phospho-alpha-D-ribose 1-diphosphate + ATP</text>
        <dbReference type="Rhea" id="RHEA:18473"/>
        <dbReference type="ChEBI" id="CHEBI:30616"/>
        <dbReference type="ChEBI" id="CHEBI:33019"/>
        <dbReference type="ChEBI" id="CHEBI:58017"/>
        <dbReference type="ChEBI" id="CHEBI:73183"/>
        <dbReference type="EC" id="2.4.2.17"/>
    </reaction>
</comment>
<comment type="pathway">
    <text evidence="1">Amino-acid biosynthesis; L-histidine biosynthesis; L-histidine from 5-phospho-alpha-D-ribose 1-diphosphate: step 1/9.</text>
</comment>
<comment type="subunit">
    <text evidence="1">Heteromultimer composed of HisG and HisZ subunits.</text>
</comment>
<comment type="subcellular location">
    <subcellularLocation>
        <location evidence="1">Cytoplasm</location>
    </subcellularLocation>
</comment>
<comment type="domain">
    <text>Lacks the C-terminal regulatory region which is replaced by HisZ.</text>
</comment>
<comment type="similarity">
    <text evidence="1">Belongs to the ATP phosphoribosyltransferase family. Short subfamily.</text>
</comment>
<organism>
    <name type="scientific">Symbiobacterium thermophilum (strain DSM 24528 / JCM 14929 / IAM 14863 / T)</name>
    <dbReference type="NCBI Taxonomy" id="292459"/>
    <lineage>
        <taxon>Bacteria</taxon>
        <taxon>Bacillati</taxon>
        <taxon>Bacillota</taxon>
        <taxon>Clostridia</taxon>
        <taxon>Eubacteriales</taxon>
        <taxon>Symbiobacteriaceae</taxon>
        <taxon>Symbiobacterium</taxon>
    </lineage>
</organism>
<feature type="chain" id="PRO_0000229334" description="ATP phosphoribosyltransferase">
    <location>
        <begin position="1"/>
        <end position="221"/>
    </location>
</feature>
<protein>
    <recommendedName>
        <fullName evidence="1">ATP phosphoribosyltransferase</fullName>
        <shortName evidence="1">ATP-PRT</shortName>
        <shortName evidence="1">ATP-PRTase</shortName>
        <ecNumber evidence="1">2.4.2.17</ecNumber>
    </recommendedName>
</protein>
<gene>
    <name evidence="1" type="primary">hisG</name>
    <name type="ordered locus">STH2838</name>
</gene>
<proteinExistence type="inferred from homology"/>
<evidence type="ECO:0000255" key="1">
    <source>
        <dbReference type="HAMAP-Rule" id="MF_01018"/>
    </source>
</evidence>
<sequence length="221" mass="24515">MSPITIALPKGRPYAATVRFLREAGLAGPELEPEEGRSLYVECPAQGTRFIIARDSDVPTYVEYGAADLGIVGKNVLMELEPQVYELLDLGYSQCRFVLAAPAGVDPRQLLSGRSRQRVATKYPRMTEAYFNSRGLQVETIFLHGSIEVAPKVGLADLIVDIVETGRTLRENNLVVVEELWTSSMRLIANRAAYRLRAERIGPMVQRLRELVSRRAVAANA</sequence>
<reference key="1">
    <citation type="journal article" date="2004" name="Nucleic Acids Res.">
        <title>Genome sequence of Symbiobacterium thermophilum, an uncultivable bacterium that depends on microbial commensalism.</title>
        <authorList>
            <person name="Ueda K."/>
            <person name="Yamashita A."/>
            <person name="Ishikawa J."/>
            <person name="Shimada M."/>
            <person name="Watsuji T."/>
            <person name="Morimura K."/>
            <person name="Ikeda H."/>
            <person name="Hattori M."/>
            <person name="Beppu T."/>
        </authorList>
    </citation>
    <scope>NUCLEOTIDE SEQUENCE [LARGE SCALE GENOMIC DNA]</scope>
    <source>
        <strain>DSM 24528 / JCM 14929 / IAM 14863 / T</strain>
    </source>
</reference>